<evidence type="ECO:0000255" key="1"/>
<evidence type="ECO:0000305" key="2"/>
<proteinExistence type="inferred from homology"/>
<comment type="subcellular location">
    <subcellularLocation>
        <location evidence="2">Cell membrane</location>
        <topology evidence="2">Multi-pass membrane protein</topology>
    </subcellularLocation>
</comment>
<comment type="similarity">
    <text evidence="2">Belongs to the major facilitator superfamily.</text>
</comment>
<accession>Q58955</accession>
<feature type="chain" id="PRO_0000084887" description="Uncharacterized MFS-type transporter MJ1560">
    <location>
        <begin position="1"/>
        <end position="386"/>
    </location>
</feature>
<feature type="transmembrane region" description="Helical" evidence="1">
    <location>
        <begin position="8"/>
        <end position="28"/>
    </location>
</feature>
<feature type="transmembrane region" description="Helical" evidence="1">
    <location>
        <begin position="43"/>
        <end position="63"/>
    </location>
</feature>
<feature type="transmembrane region" description="Helical" evidence="1">
    <location>
        <begin position="79"/>
        <end position="99"/>
    </location>
</feature>
<feature type="transmembrane region" description="Helical" evidence="1">
    <location>
        <begin position="102"/>
        <end position="122"/>
    </location>
</feature>
<feature type="transmembrane region" description="Helical" evidence="1">
    <location>
        <begin position="134"/>
        <end position="154"/>
    </location>
</feature>
<feature type="transmembrane region" description="Helical" evidence="1">
    <location>
        <begin position="156"/>
        <end position="176"/>
    </location>
</feature>
<feature type="transmembrane region" description="Helical" evidence="1">
    <location>
        <begin position="216"/>
        <end position="236"/>
    </location>
</feature>
<feature type="transmembrane region" description="Helical" evidence="1">
    <location>
        <begin position="241"/>
        <end position="261"/>
    </location>
</feature>
<feature type="transmembrane region" description="Helical" evidence="1">
    <location>
        <begin position="272"/>
        <end position="292"/>
    </location>
</feature>
<feature type="transmembrane region" description="Helical" evidence="1">
    <location>
        <begin position="297"/>
        <end position="317"/>
    </location>
</feature>
<feature type="transmembrane region" description="Helical" evidence="1">
    <location>
        <begin position="342"/>
        <end position="362"/>
    </location>
</feature>
<feature type="transmembrane region" description="Helical" evidence="1">
    <location>
        <begin position="365"/>
        <end position="385"/>
    </location>
</feature>
<organism>
    <name type="scientific">Methanocaldococcus jannaschii (strain ATCC 43067 / DSM 2661 / JAL-1 / JCM 10045 / NBRC 100440)</name>
    <name type="common">Methanococcus jannaschii</name>
    <dbReference type="NCBI Taxonomy" id="243232"/>
    <lineage>
        <taxon>Archaea</taxon>
        <taxon>Methanobacteriati</taxon>
        <taxon>Methanobacteriota</taxon>
        <taxon>Methanomada group</taxon>
        <taxon>Methanococci</taxon>
        <taxon>Methanococcales</taxon>
        <taxon>Methanocaldococcaceae</taxon>
        <taxon>Methanocaldococcus</taxon>
    </lineage>
</organism>
<protein>
    <recommendedName>
        <fullName>Uncharacterized MFS-type transporter MJ1560</fullName>
    </recommendedName>
</protein>
<name>Y1560_METJA</name>
<sequence length="386" mass="42068">MGKLEKNVFVIWITTFTTMLGVGFIAPIMAIYAQTLGATNLEIGLIFGSFALARTVAQIPVGVLSDIYGKKFFIVCGTFFYGVSTLMYNFVSTVLGFLIVRIFTGIFSAFVTPVAGSYIAAIAPKTRLGEYMGIFNSAITLGFGIGPFIGGILADMYGIKMPFYFCGFLGILAAIISYMKLEDIVFNKNKEKIDVKKISTLFSFEFLKNRNFSSSFIINVSNVMINAGIYAYLALYAINYNITISQVGFMIALTNILMALLQRSFGKLYDKLGNIMIIIGIFIISFGMYLLSTSTTFLTILASLTIIAVGSSISSTATTSLAVKDIPTHRKGEAMGLFTTSINIGMFIGAVSFGFLADILGIANMYKFSAIFSIVVGIISYLRIER</sequence>
<keyword id="KW-1003">Cell membrane</keyword>
<keyword id="KW-0472">Membrane</keyword>
<keyword id="KW-1185">Reference proteome</keyword>
<keyword id="KW-0812">Transmembrane</keyword>
<keyword id="KW-1133">Transmembrane helix</keyword>
<keyword id="KW-0813">Transport</keyword>
<gene>
    <name type="ordered locus">MJ1560</name>
</gene>
<reference key="1">
    <citation type="journal article" date="1996" name="Science">
        <title>Complete genome sequence of the methanogenic archaeon, Methanococcus jannaschii.</title>
        <authorList>
            <person name="Bult C.J."/>
            <person name="White O."/>
            <person name="Olsen G.J."/>
            <person name="Zhou L."/>
            <person name="Fleischmann R.D."/>
            <person name="Sutton G.G."/>
            <person name="Blake J.A."/>
            <person name="FitzGerald L.M."/>
            <person name="Clayton R.A."/>
            <person name="Gocayne J.D."/>
            <person name="Kerlavage A.R."/>
            <person name="Dougherty B.A."/>
            <person name="Tomb J.-F."/>
            <person name="Adams M.D."/>
            <person name="Reich C.I."/>
            <person name="Overbeek R."/>
            <person name="Kirkness E.F."/>
            <person name="Weinstock K.G."/>
            <person name="Merrick J.M."/>
            <person name="Glodek A."/>
            <person name="Scott J.L."/>
            <person name="Geoghagen N.S.M."/>
            <person name="Weidman J.F."/>
            <person name="Fuhrmann J.L."/>
            <person name="Nguyen D."/>
            <person name="Utterback T.R."/>
            <person name="Kelley J.M."/>
            <person name="Peterson J.D."/>
            <person name="Sadow P.W."/>
            <person name="Hanna M.C."/>
            <person name="Cotton M.D."/>
            <person name="Roberts K.M."/>
            <person name="Hurst M.A."/>
            <person name="Kaine B.P."/>
            <person name="Borodovsky M."/>
            <person name="Klenk H.-P."/>
            <person name="Fraser C.M."/>
            <person name="Smith H.O."/>
            <person name="Woese C.R."/>
            <person name="Venter J.C."/>
        </authorList>
    </citation>
    <scope>NUCLEOTIDE SEQUENCE [LARGE SCALE GENOMIC DNA]</scope>
    <source>
        <strain>ATCC 43067 / DSM 2661 / JAL-1 / JCM 10045 / NBRC 100440</strain>
    </source>
</reference>
<dbReference type="EMBL" id="L77117">
    <property type="protein sequence ID" value="AAB99579.1"/>
    <property type="molecule type" value="Genomic_DNA"/>
</dbReference>
<dbReference type="PIR" id="G64494">
    <property type="entry name" value="G64494"/>
</dbReference>
<dbReference type="RefSeq" id="WP_010871084.1">
    <property type="nucleotide sequence ID" value="NC_000909.1"/>
</dbReference>
<dbReference type="SMR" id="Q58955"/>
<dbReference type="FunCoup" id="Q58955">
    <property type="interactions" value="71"/>
</dbReference>
<dbReference type="STRING" id="243232.MJ_1560"/>
<dbReference type="PaxDb" id="243232-MJ_1560"/>
<dbReference type="EnsemblBacteria" id="AAB99579">
    <property type="protein sequence ID" value="AAB99579"/>
    <property type="gene ID" value="MJ_1560"/>
</dbReference>
<dbReference type="GeneID" id="1452468"/>
<dbReference type="KEGG" id="mja:MJ_1560"/>
<dbReference type="eggNOG" id="arCOG00130">
    <property type="taxonomic scope" value="Archaea"/>
</dbReference>
<dbReference type="HOGENOM" id="CLU_001265_10_14_2"/>
<dbReference type="InParanoid" id="Q58955"/>
<dbReference type="OrthoDB" id="117970at2157"/>
<dbReference type="PhylomeDB" id="Q58955"/>
<dbReference type="Proteomes" id="UP000000805">
    <property type="component" value="Chromosome"/>
</dbReference>
<dbReference type="GO" id="GO:0005886">
    <property type="term" value="C:plasma membrane"/>
    <property type="evidence" value="ECO:0007669"/>
    <property type="project" value="UniProtKB-SubCell"/>
</dbReference>
<dbReference type="GO" id="GO:0022857">
    <property type="term" value="F:transmembrane transporter activity"/>
    <property type="evidence" value="ECO:0000318"/>
    <property type="project" value="GO_Central"/>
</dbReference>
<dbReference type="CDD" id="cd17325">
    <property type="entry name" value="MFS_MdtG_SLC18_like"/>
    <property type="match status" value="1"/>
</dbReference>
<dbReference type="Gene3D" id="1.20.1250.20">
    <property type="entry name" value="MFS general substrate transporter like domains"/>
    <property type="match status" value="1"/>
</dbReference>
<dbReference type="InterPro" id="IPR011701">
    <property type="entry name" value="MFS"/>
</dbReference>
<dbReference type="InterPro" id="IPR020846">
    <property type="entry name" value="MFS_dom"/>
</dbReference>
<dbReference type="InterPro" id="IPR050497">
    <property type="entry name" value="MFS_MdtG_subfamily"/>
</dbReference>
<dbReference type="InterPro" id="IPR036259">
    <property type="entry name" value="MFS_trans_sf"/>
</dbReference>
<dbReference type="InterPro" id="IPR001958">
    <property type="entry name" value="Tet-R_TetA/multi-R_MdtG-like"/>
</dbReference>
<dbReference type="PANTHER" id="PTHR43414">
    <property type="entry name" value="MULTIDRUG RESISTANCE PROTEIN MDTG"/>
    <property type="match status" value="1"/>
</dbReference>
<dbReference type="PANTHER" id="PTHR43414:SF6">
    <property type="entry name" value="MULTIDRUG RESISTANCE PROTEIN MDTG"/>
    <property type="match status" value="1"/>
</dbReference>
<dbReference type="Pfam" id="PF07690">
    <property type="entry name" value="MFS_1"/>
    <property type="match status" value="1"/>
</dbReference>
<dbReference type="PRINTS" id="PR01035">
    <property type="entry name" value="TCRTETA"/>
</dbReference>
<dbReference type="SUPFAM" id="SSF103473">
    <property type="entry name" value="MFS general substrate transporter"/>
    <property type="match status" value="1"/>
</dbReference>
<dbReference type="PROSITE" id="PS50850">
    <property type="entry name" value="MFS"/>
    <property type="match status" value="1"/>
</dbReference>